<organismHost>
    <name type="scientific">Acinetobacter calcoaceticus</name>
    <dbReference type="NCBI Taxonomy" id="471"/>
</organismHost>
<organismHost>
    <name type="scientific">Escherichia coli</name>
    <dbReference type="NCBI Taxonomy" id="562"/>
</organismHost>
<organismHost>
    <name type="scientific">Proteus mirabilis</name>
    <dbReference type="NCBI Taxonomy" id="584"/>
</organismHost>
<organismHost>
    <name type="scientific">Pseudomonas aeruginosa</name>
    <dbReference type="NCBI Taxonomy" id="287"/>
</organismHost>
<organismHost>
    <name type="scientific">Pseudomonas fluorescens</name>
    <dbReference type="NCBI Taxonomy" id="294"/>
</organismHost>
<organismHost>
    <name type="scientific">Pseudomonas putida</name>
    <name type="common">Arthrobacter siderocapsulatus</name>
    <dbReference type="NCBI Taxonomy" id="303"/>
</organismHost>
<organismHost>
    <name type="scientific">Salmonella typhimurium</name>
    <dbReference type="NCBI Taxonomy" id="90371"/>
</organismHost>
<organismHost>
    <name type="scientific">Vibrio cholerae</name>
    <dbReference type="NCBI Taxonomy" id="666"/>
</organismHost>
<gene>
    <name type="primary">III</name>
</gene>
<comment type="function">
    <text>Major capsid protein self-assembles to form an icosahedral capsid with a pseudo T=25 symmetry, about 66 nm in diameter, and consisting of 240 capsid proteins trimers. The capsid encapsulates an inner membrane and the genomic dsDNA genome. The major coat protein P3 and two assembly factors (P10 and P17) are needed during the assembly of the virus particle inside the host cell, when the capsid protein multimers are capable of enclosing the host-derived membrane, containing the virus-encoded membrane-associated proteins.</text>
</comment>
<comment type="subunit">
    <text>Homotrimer.</text>
</comment>
<comment type="subcellular location">
    <subcellularLocation>
        <location>Virion</location>
    </subcellularLocation>
</comment>
<comment type="online information" name="Virus Particle ExploreR db">
    <link uri="https://viperdb.org/Info_Page.php?VDB=1hb9"/>
    <text>Icosahedral capsid structure</text>
</comment>
<comment type="online information" name="Virus Particle ExploreR db">
    <link uri="https://viperdb.org/Info_Page.php?VDB=1gw7"/>
    <text>Icosahedral capsid structure</text>
</comment>
<comment type="online information" name="Virus Particle ExploreR db">
    <link uri="https://viperdb.org/Info_Page.php?VDB=1gw8"/>
    <text>Icosahedral capsid structure of SUS607 mutant</text>
</comment>
<comment type="online information" name="Virus Particle ExploreR db">
    <link uri="https://viperdb.org/Info_Page.php?VDB=1hb5"/>
    <text>Icosahedral virus capsid P3-shell structure</text>
</comment>
<comment type="online information" name="Virus Particle ExploreR db">
    <link uri="https://viperdb.org/Info_Page.php?VDB=1hb7"/>
    <text>Icosahedral capsid structure of SUS1 mutant</text>
</comment>
<feature type="initiator methionine" description="Removed; by host" evidence="1">
    <location>
        <position position="1"/>
    </location>
</feature>
<feature type="chain" id="PRO_0000165345" description="Major capsid protein P3">
    <location>
        <begin position="2"/>
        <end position="395"/>
    </location>
</feature>
<feature type="helix" evidence="3">
    <location>
        <begin position="18"/>
        <end position="34"/>
    </location>
</feature>
<feature type="strand" evidence="3">
    <location>
        <begin position="35"/>
        <end position="47"/>
    </location>
</feature>
<feature type="turn" evidence="3">
    <location>
        <begin position="49"/>
        <end position="51"/>
    </location>
</feature>
<feature type="strand" evidence="3">
    <location>
        <begin position="54"/>
        <end position="57"/>
    </location>
</feature>
<feature type="strand" evidence="3">
    <location>
        <begin position="63"/>
        <end position="78"/>
    </location>
</feature>
<feature type="strand" evidence="3">
    <location>
        <begin position="85"/>
        <end position="87"/>
    </location>
</feature>
<feature type="helix" evidence="3">
    <location>
        <begin position="91"/>
        <end position="94"/>
    </location>
</feature>
<feature type="strand" evidence="3">
    <location>
        <begin position="95"/>
        <end position="102"/>
    </location>
</feature>
<feature type="strand" evidence="3">
    <location>
        <begin position="108"/>
        <end position="113"/>
    </location>
</feature>
<feature type="helix" evidence="3">
    <location>
        <begin position="114"/>
        <end position="125"/>
    </location>
</feature>
<feature type="strand" evidence="3">
    <location>
        <begin position="142"/>
        <end position="145"/>
    </location>
</feature>
<feature type="strand" evidence="3">
    <location>
        <begin position="147"/>
        <end position="149"/>
    </location>
</feature>
<feature type="strand" evidence="3">
    <location>
        <begin position="152"/>
        <end position="154"/>
    </location>
</feature>
<feature type="strand" evidence="3">
    <location>
        <begin position="159"/>
        <end position="175"/>
    </location>
</feature>
<feature type="strand" evidence="4">
    <location>
        <begin position="186"/>
        <end position="188"/>
    </location>
</feature>
<feature type="strand" evidence="3">
    <location>
        <begin position="191"/>
        <end position="196"/>
    </location>
</feature>
<feature type="turn" evidence="3">
    <location>
        <begin position="199"/>
        <end position="201"/>
    </location>
</feature>
<feature type="strand" evidence="3">
    <location>
        <begin position="202"/>
        <end position="204"/>
    </location>
</feature>
<feature type="strand" evidence="3">
    <location>
        <begin position="214"/>
        <end position="217"/>
    </location>
</feature>
<feature type="helix" evidence="3">
    <location>
        <begin position="220"/>
        <end position="222"/>
    </location>
</feature>
<feature type="strand" evidence="3">
    <location>
        <begin position="223"/>
        <end position="239"/>
    </location>
</feature>
<feature type="strand" evidence="3">
    <location>
        <begin position="244"/>
        <end position="247"/>
    </location>
</feature>
<feature type="helix" evidence="3">
    <location>
        <begin position="251"/>
        <end position="254"/>
    </location>
</feature>
<feature type="strand" evidence="3">
    <location>
        <begin position="256"/>
        <end position="266"/>
    </location>
</feature>
<feature type="strand" evidence="3">
    <location>
        <begin position="274"/>
        <end position="277"/>
    </location>
</feature>
<feature type="strand" evidence="3">
    <location>
        <begin position="283"/>
        <end position="293"/>
    </location>
</feature>
<feature type="strand" evidence="3">
    <location>
        <begin position="303"/>
        <end position="310"/>
    </location>
</feature>
<feature type="turn" evidence="3">
    <location>
        <begin position="311"/>
        <end position="313"/>
    </location>
</feature>
<feature type="strand" evidence="3">
    <location>
        <begin position="314"/>
        <end position="316"/>
    </location>
</feature>
<feature type="helix" evidence="3">
    <location>
        <begin position="321"/>
        <end position="332"/>
    </location>
</feature>
<feature type="strand" evidence="3">
    <location>
        <begin position="333"/>
        <end position="335"/>
    </location>
</feature>
<feature type="strand" evidence="3">
    <location>
        <begin position="340"/>
        <end position="344"/>
    </location>
</feature>
<feature type="strand" evidence="3">
    <location>
        <begin position="346"/>
        <end position="348"/>
    </location>
</feature>
<feature type="helix" evidence="2">
    <location>
        <begin position="352"/>
        <end position="355"/>
    </location>
</feature>
<feature type="strand" evidence="3">
    <location>
        <begin position="357"/>
        <end position="365"/>
    </location>
</feature>
<feature type="strand" evidence="3">
    <location>
        <begin position="371"/>
        <end position="382"/>
    </location>
</feature>
<reference key="1">
    <citation type="journal article" date="1990" name="Virology">
        <title>Capsomer proteins of bacteriophage PRD1, a bacterial virus with a membrane.</title>
        <authorList>
            <person name="Bamford J.K.H."/>
            <person name="Bamford D.H."/>
        </authorList>
    </citation>
    <scope>NUCLEOTIDE SEQUENCE [GENOMIC DNA]</scope>
    <scope>PROTEIN SEQUENCE OF 2-11</scope>
</reference>
<reference key="2">
    <citation type="journal article" date="2005" name="J. Mol. Biol.">
        <title>A snapshot of viral evolution from genome analysis of the tectiviridae family.</title>
        <authorList>
            <person name="Saren A.M."/>
            <person name="Ravantti J.J."/>
            <person name="Benson S.D."/>
            <person name="Burnett R.M."/>
            <person name="Paulin L."/>
            <person name="Bamford D.H."/>
            <person name="Bamford J.K.H."/>
        </authorList>
    </citation>
    <scope>NUCLEOTIDE SEQUENCE [GENOMIC DNA]</scope>
</reference>
<reference key="3">
    <citation type="journal article" date="1993" name="J. Mol. Biol.">
        <title>Crystallization of the major coat protein of PRD1, a bacteriophage with an internal membrane.</title>
        <authorList>
            <person name="Stewart P.L."/>
            <person name="Ghosh S."/>
            <person name="Bamford D.H."/>
            <person name="Burnett R.M."/>
        </authorList>
    </citation>
    <scope>X-RAY CRYSTALLOGRAPHY (1.85 ANGSTROMS)</scope>
</reference>
<reference key="4">
    <citation type="journal article" date="2002" name="Acta Crystallogr. D">
        <title>The X-ray crystal structure of P3, the major coat protein of the lipid-containing bacteriophage PRD1, at 1.65 A resolution.</title>
        <authorList>
            <person name="Benson S.D."/>
            <person name="Bamford J.K.H."/>
            <person name="Bamford D.H."/>
            <person name="Burnett R.M."/>
        </authorList>
    </citation>
    <scope>STRUCTURE BY ELECTRON MICROSCOPY (1.65 ANGSTROMS)</scope>
</reference>
<reference key="5">
    <citation type="journal article" date="2004" name="Nature">
        <title>Insights into assembly from structural analysis of bacteriophage PRD1.</title>
        <authorList>
            <person name="Abrescia N.G.A."/>
            <person name="Cockburn J.J.B."/>
            <person name="Grimes J.M."/>
            <person name="Sutton G.C."/>
            <person name="Diprose J.M."/>
            <person name="Butcher S.J."/>
            <person name="Fuller S.D."/>
            <person name="San Martin C."/>
            <person name="Burnett R.M."/>
            <person name="Stuart D.I."/>
            <person name="Bamford D.H."/>
            <person name="Bamford J.K.H."/>
        </authorList>
    </citation>
    <scope>X-RAY CRYSTALLOGRAPHY (4.2 ANGSTROMS)</scope>
</reference>
<reference key="6">
    <citation type="journal article" date="2004" name="Nature">
        <title>Membrane structure and interactions with protein and DNA in bacteriophage PRD1.</title>
        <authorList>
            <person name="Cockburn J.J."/>
            <person name="Abrescia N.G."/>
            <person name="Grimes J.M."/>
            <person name="Sutton G.C."/>
            <person name="Diprose J.M."/>
            <person name="Benevides J.M."/>
            <person name="Thomas G.J. Jr."/>
            <person name="Bamford J.K.H."/>
            <person name="Bamford D.H."/>
            <person name="Stuart D.I."/>
        </authorList>
    </citation>
    <scope>X-RAY CRYSTALLOGRAPHY (4.2 ANGSTROMS)</scope>
</reference>
<evidence type="ECO:0000269" key="1">
    <source>
    </source>
</evidence>
<evidence type="ECO:0007829" key="2">
    <source>
        <dbReference type="PDB" id="1CJD"/>
    </source>
</evidence>
<evidence type="ECO:0007829" key="3">
    <source>
        <dbReference type="PDB" id="1HX6"/>
    </source>
</evidence>
<evidence type="ECO:0007829" key="4">
    <source>
        <dbReference type="PDB" id="7OOK"/>
    </source>
</evidence>
<organism>
    <name type="scientific">Enterobacteria phage PRD1</name>
    <name type="common">Bacteriophage PRD1</name>
    <dbReference type="NCBI Taxonomy" id="10658"/>
    <lineage>
        <taxon>Viruses</taxon>
        <taxon>Varidnaviria</taxon>
        <taxon>Bamfordvirae</taxon>
        <taxon>Preplasmiviricota</taxon>
        <taxon>Tectiliviricetes</taxon>
        <taxon>Kalamavirales</taxon>
        <taxon>Tectiviridae</taxon>
        <taxon>Alphatectivirus</taxon>
        <taxon>Alphatectivirus PRD1</taxon>
    </lineage>
</organism>
<accession>P22535</accession>
<accession>Q3T4N2</accession>
<dbReference type="EMBL" id="AY848689">
    <property type="protein sequence ID" value="AAX45916.1"/>
    <property type="molecule type" value="Genomic_DNA"/>
</dbReference>
<dbReference type="EMBL" id="M55567">
    <property type="protein sequence ID" value="AAA32445.1"/>
    <property type="molecule type" value="Genomic_DNA"/>
</dbReference>
<dbReference type="PIR" id="A46345">
    <property type="entry name" value="A46345"/>
</dbReference>
<dbReference type="RefSeq" id="NP_040692.1">
    <property type="nucleotide sequence ID" value="NC_001421.2"/>
</dbReference>
<dbReference type="RefSeq" id="YP_009639968.1">
    <property type="nucleotide sequence ID" value="NC_001421.2"/>
</dbReference>
<dbReference type="PDB" id="1CJD">
    <property type="method" value="X-ray"/>
    <property type="resolution" value="1.85 A"/>
    <property type="chains" value="A/B/C=2-395"/>
</dbReference>
<dbReference type="PDB" id="1GW7">
    <property type="method" value="EM"/>
    <property type="resolution" value="13.50 A"/>
    <property type="chains" value="A/B/C/D/E/F/G/H/I/J/K/L=2-395"/>
</dbReference>
<dbReference type="PDB" id="1GW8">
    <property type="method" value="EM"/>
    <property type="resolution" value="13.30 A"/>
    <property type="chains" value="A/B/C/D/E/F/G/H/I/J/K/L=2-395"/>
</dbReference>
<dbReference type="PDB" id="1HB5">
    <property type="method" value="EM"/>
    <property type="resolution" value="12.00 A"/>
    <property type="chains" value="A/B/C/D/E/F/G/H/I=2-395"/>
</dbReference>
<dbReference type="PDB" id="1HB7">
    <property type="method" value="EM"/>
    <property type="resolution" value="14.00 A"/>
    <property type="chains" value="A/B/C/D/E/F/G/H/I/J/K/L=2-395"/>
</dbReference>
<dbReference type="PDB" id="1HB9">
    <property type="method" value="EM"/>
    <property type="resolution" value="25.00 A"/>
    <property type="chains" value="A/B/C/D/E/F/G/H/I/J/K/L=2-395"/>
</dbReference>
<dbReference type="PDB" id="1HQN">
    <property type="method" value="X-ray"/>
    <property type="resolution" value="2.20 A"/>
    <property type="chains" value="A/B/C=2-395"/>
</dbReference>
<dbReference type="PDB" id="1HX6">
    <property type="method" value="X-ray"/>
    <property type="resolution" value="1.65 A"/>
    <property type="chains" value="A/B/C=2-395"/>
</dbReference>
<dbReference type="PDB" id="1W8X">
    <property type="method" value="X-ray"/>
    <property type="resolution" value="4.20 A"/>
    <property type="chains" value="A/B/C/D/E/F/G/H/I/J/K/L=1-395"/>
</dbReference>
<dbReference type="PDB" id="7OOK">
    <property type="method" value="X-ray"/>
    <property type="resolution" value="2.23 A"/>
    <property type="chains" value="A/B/C=1-395"/>
</dbReference>
<dbReference type="PDBsum" id="1CJD"/>
<dbReference type="PDBsum" id="1GW7"/>
<dbReference type="PDBsum" id="1GW8"/>
<dbReference type="PDBsum" id="1HB5"/>
<dbReference type="PDBsum" id="1HB7"/>
<dbReference type="PDBsum" id="1HB9"/>
<dbReference type="PDBsum" id="1HQN"/>
<dbReference type="PDBsum" id="1HX6"/>
<dbReference type="PDBsum" id="1W8X"/>
<dbReference type="PDBsum" id="7OOK"/>
<dbReference type="SMR" id="P22535"/>
<dbReference type="GeneID" id="1260932"/>
<dbReference type="OrthoDB" id="19760at10239"/>
<dbReference type="EvolutionaryTrace" id="P22535"/>
<dbReference type="Proteomes" id="UP000002143">
    <property type="component" value="Segment"/>
</dbReference>
<dbReference type="GO" id="GO:0019028">
    <property type="term" value="C:viral capsid"/>
    <property type="evidence" value="ECO:0007669"/>
    <property type="project" value="UniProtKB-KW"/>
</dbReference>
<dbReference type="Gene3D" id="2.60.120.20">
    <property type="match status" value="1"/>
</dbReference>
<dbReference type="Gene3D" id="2.70.9.30">
    <property type="entry name" value="Viral coat protein p3"/>
    <property type="match status" value="1"/>
</dbReference>
<dbReference type="InterPro" id="IPR015108">
    <property type="entry name" value="Phage_PRD1_P3"/>
</dbReference>
<dbReference type="InterPro" id="IPR016115">
    <property type="entry name" value="Phage_PRD1_P3_N"/>
</dbReference>
<dbReference type="InterPro" id="IPR029053">
    <property type="entry name" value="Viral_coat"/>
</dbReference>
<dbReference type="InterPro" id="IPR016112">
    <property type="entry name" value="VP_dsDNA_II"/>
</dbReference>
<dbReference type="Pfam" id="PF09018">
    <property type="entry name" value="Phage_Capsid_P3"/>
    <property type="match status" value="1"/>
</dbReference>
<dbReference type="SUPFAM" id="SSF49749">
    <property type="entry name" value="Group II dsDNA viruses VP"/>
    <property type="match status" value="2"/>
</dbReference>
<name>CAPSD_BPPRD</name>
<sequence>MAQVQQLTPAQQAALRNQQAMAANLQARQIVLQQSYPVIQQVETQTFDPANRSVFDVTPANVGIVKGFLVKVTAAITNNHATEAVALTDFGPANLVQRVIYYDPDNQRHTETSGWHLHFVNTAKQGAPFLSSMVTDSPIKYGDVMNVIDAPATIAAGATGELTMYYWVPLAYSETDLTGAVLANVPQSKQRLKLEFANNNTAFAAVGANPLEAIYQGAGAADCEFEEISYTVYQSYLDQLPVGQNGYILPLIDLSTLYNLENSAQAGLTPNVDFVVQYANLYRYLSTIAVFDNGGSFNAGTDINYLSQRTANFSDTRKLDPKTWAAQTRRRIATDFPKGVYYCDNRDKPIYTLQYGNVGFVVNPKTVNQNARLLMGYEYFTSRTELVNAGTISTT</sequence>
<protein>
    <recommendedName>
        <fullName>Major capsid protein P3</fullName>
    </recommendedName>
    <alternativeName>
        <fullName>Protein P3</fullName>
    </alternativeName>
</protein>
<proteinExistence type="evidence at protein level"/>
<keyword id="KW-0002">3D-structure</keyword>
<keyword id="KW-0167">Capsid protein</keyword>
<keyword id="KW-0903">Direct protein sequencing</keyword>
<keyword id="KW-1185">Reference proteome</keyword>
<keyword id="KW-0946">Virion</keyword>